<gene>
    <name evidence="1" type="primary">gcvH</name>
    <name type="ordered locus">TM_0212</name>
</gene>
<accession>Q9WY55</accession>
<keyword id="KW-0002">3D-structure</keyword>
<keyword id="KW-0450">Lipoyl</keyword>
<keyword id="KW-1185">Reference proteome</keyword>
<evidence type="ECO:0000255" key="1">
    <source>
        <dbReference type="HAMAP-Rule" id="MF_00272"/>
    </source>
</evidence>
<evidence type="ECO:0000255" key="2">
    <source>
        <dbReference type="PROSITE-ProRule" id="PRU01066"/>
    </source>
</evidence>
<evidence type="ECO:0007829" key="3">
    <source>
        <dbReference type="PDB" id="1ZKO"/>
    </source>
</evidence>
<name>GCSH_THEMA</name>
<proteinExistence type="evidence at protein level"/>
<protein>
    <recommendedName>
        <fullName evidence="1">Glycine cleavage system H protein</fullName>
    </recommendedName>
</protein>
<sequence length="124" mass="13915">MKMKKYTKTHEWVSIEDKVATVGITNHAQEQLGDVVYVDLPEVGREVKKGEVVASIESVKAAADVYAPLSGKIVEVNEKLDTEPELINKDPEGEGWLFKMEISDEGELEDLLDEQAYQEFCAQE</sequence>
<organism>
    <name type="scientific">Thermotoga maritima (strain ATCC 43589 / DSM 3109 / JCM 10099 / NBRC 100826 / MSB8)</name>
    <dbReference type="NCBI Taxonomy" id="243274"/>
    <lineage>
        <taxon>Bacteria</taxon>
        <taxon>Thermotogati</taxon>
        <taxon>Thermotogota</taxon>
        <taxon>Thermotogae</taxon>
        <taxon>Thermotogales</taxon>
        <taxon>Thermotogaceae</taxon>
        <taxon>Thermotoga</taxon>
    </lineage>
</organism>
<comment type="function">
    <text evidence="1">The glycine cleavage system catalyzes the degradation of glycine. The H protein shuttles the methylamine group of glycine from the P protein to the T protein.</text>
</comment>
<comment type="cofactor">
    <cofactor evidence="1">
        <name>(R)-lipoate</name>
        <dbReference type="ChEBI" id="CHEBI:83088"/>
    </cofactor>
    <text evidence="1">Binds 1 lipoyl cofactor covalently.</text>
</comment>
<comment type="subunit">
    <text evidence="1">The glycine cleavage system is composed of four proteins: P, T, L and H.</text>
</comment>
<comment type="similarity">
    <text evidence="1">Belongs to the GcvH family.</text>
</comment>
<dbReference type="EMBL" id="AE000512">
    <property type="protein sequence ID" value="AAD35304.1"/>
    <property type="molecule type" value="Genomic_DNA"/>
</dbReference>
<dbReference type="PIR" id="F72403">
    <property type="entry name" value="F72403"/>
</dbReference>
<dbReference type="RefSeq" id="NP_228027.1">
    <property type="nucleotide sequence ID" value="NC_000853.1"/>
</dbReference>
<dbReference type="RefSeq" id="WP_010865076.1">
    <property type="nucleotide sequence ID" value="NC_000853.1"/>
</dbReference>
<dbReference type="PDB" id="1ZKO">
    <property type="method" value="X-ray"/>
    <property type="resolution" value="1.65 A"/>
    <property type="chains" value="A/B=1-124"/>
</dbReference>
<dbReference type="PDB" id="2KA7">
    <property type="method" value="NMR"/>
    <property type="chains" value="A=1-124"/>
</dbReference>
<dbReference type="PDBsum" id="1ZKO"/>
<dbReference type="PDBsum" id="2KA7"/>
<dbReference type="BMRB" id="Q9WY55"/>
<dbReference type="SMR" id="Q9WY55"/>
<dbReference type="FunCoup" id="Q9WY55">
    <property type="interactions" value="335"/>
</dbReference>
<dbReference type="STRING" id="243274.TM_0212"/>
<dbReference type="PaxDb" id="243274-THEMA_03665"/>
<dbReference type="EnsemblBacteria" id="AAD35304">
    <property type="protein sequence ID" value="AAD35304"/>
    <property type="gene ID" value="TM_0212"/>
</dbReference>
<dbReference type="KEGG" id="tma:TM0212"/>
<dbReference type="KEGG" id="tmm:Tmari_0210"/>
<dbReference type="eggNOG" id="COG0509">
    <property type="taxonomic scope" value="Bacteria"/>
</dbReference>
<dbReference type="InParanoid" id="Q9WY55"/>
<dbReference type="OrthoDB" id="9796712at2"/>
<dbReference type="EvolutionaryTrace" id="Q9WY55"/>
<dbReference type="Proteomes" id="UP000008183">
    <property type="component" value="Chromosome"/>
</dbReference>
<dbReference type="GO" id="GO:0005829">
    <property type="term" value="C:cytosol"/>
    <property type="evidence" value="ECO:0000318"/>
    <property type="project" value="GO_Central"/>
</dbReference>
<dbReference type="GO" id="GO:0005960">
    <property type="term" value="C:glycine cleavage complex"/>
    <property type="evidence" value="ECO:0007669"/>
    <property type="project" value="InterPro"/>
</dbReference>
<dbReference type="GO" id="GO:0019464">
    <property type="term" value="P:glycine decarboxylation via glycine cleavage system"/>
    <property type="evidence" value="ECO:0007669"/>
    <property type="project" value="UniProtKB-UniRule"/>
</dbReference>
<dbReference type="CDD" id="cd06848">
    <property type="entry name" value="GCS_H"/>
    <property type="match status" value="1"/>
</dbReference>
<dbReference type="Gene3D" id="2.40.50.100">
    <property type="match status" value="1"/>
</dbReference>
<dbReference type="HAMAP" id="MF_00272">
    <property type="entry name" value="GcvH"/>
    <property type="match status" value="1"/>
</dbReference>
<dbReference type="InterPro" id="IPR003016">
    <property type="entry name" value="2-oxoA_DH_lipoyl-BS"/>
</dbReference>
<dbReference type="InterPro" id="IPR000089">
    <property type="entry name" value="Biotin_lipoyl"/>
</dbReference>
<dbReference type="InterPro" id="IPR002930">
    <property type="entry name" value="GCV_H"/>
</dbReference>
<dbReference type="InterPro" id="IPR033753">
    <property type="entry name" value="GCV_H/Fam206"/>
</dbReference>
<dbReference type="InterPro" id="IPR017453">
    <property type="entry name" value="GCV_H_sub"/>
</dbReference>
<dbReference type="InterPro" id="IPR011053">
    <property type="entry name" value="Single_hybrid_motif"/>
</dbReference>
<dbReference type="NCBIfam" id="TIGR00527">
    <property type="entry name" value="gcvH"/>
    <property type="match status" value="1"/>
</dbReference>
<dbReference type="NCBIfam" id="NF002270">
    <property type="entry name" value="PRK01202.1"/>
    <property type="match status" value="1"/>
</dbReference>
<dbReference type="PANTHER" id="PTHR11715">
    <property type="entry name" value="GLYCINE CLEAVAGE SYSTEM H PROTEIN"/>
    <property type="match status" value="1"/>
</dbReference>
<dbReference type="PANTHER" id="PTHR11715:SF3">
    <property type="entry name" value="GLYCINE CLEAVAGE SYSTEM H PROTEIN-RELATED"/>
    <property type="match status" value="1"/>
</dbReference>
<dbReference type="Pfam" id="PF01597">
    <property type="entry name" value="GCV_H"/>
    <property type="match status" value="1"/>
</dbReference>
<dbReference type="SUPFAM" id="SSF51230">
    <property type="entry name" value="Single hybrid motif"/>
    <property type="match status" value="1"/>
</dbReference>
<dbReference type="PROSITE" id="PS50968">
    <property type="entry name" value="BIOTINYL_LIPOYL"/>
    <property type="match status" value="1"/>
</dbReference>
<dbReference type="PROSITE" id="PS00189">
    <property type="entry name" value="LIPOYL"/>
    <property type="match status" value="1"/>
</dbReference>
<reference key="1">
    <citation type="journal article" date="1999" name="Nature">
        <title>Evidence for lateral gene transfer between Archaea and Bacteria from genome sequence of Thermotoga maritima.</title>
        <authorList>
            <person name="Nelson K.E."/>
            <person name="Clayton R.A."/>
            <person name="Gill S.R."/>
            <person name="Gwinn M.L."/>
            <person name="Dodson R.J."/>
            <person name="Haft D.H."/>
            <person name="Hickey E.K."/>
            <person name="Peterson J.D."/>
            <person name="Nelson W.C."/>
            <person name="Ketchum K.A."/>
            <person name="McDonald L.A."/>
            <person name="Utterback T.R."/>
            <person name="Malek J.A."/>
            <person name="Linher K.D."/>
            <person name="Garrett M.M."/>
            <person name="Stewart A.M."/>
            <person name="Cotton M.D."/>
            <person name="Pratt M.S."/>
            <person name="Phillips C.A."/>
            <person name="Richardson D.L."/>
            <person name="Heidelberg J.F."/>
            <person name="Sutton G.G."/>
            <person name="Fleischmann R.D."/>
            <person name="Eisen J.A."/>
            <person name="White O."/>
            <person name="Salzberg S.L."/>
            <person name="Smith H.O."/>
            <person name="Venter J.C."/>
            <person name="Fraser C.M."/>
        </authorList>
    </citation>
    <scope>NUCLEOTIDE SEQUENCE [LARGE SCALE GENOMIC DNA]</scope>
    <source>
        <strain>ATCC 43589 / DSM 3109 / JCM 10099 / NBRC 100826 / MSB8</strain>
    </source>
</reference>
<feature type="chain" id="PRO_0000166258" description="Glycine cleavage system H protein">
    <location>
        <begin position="1"/>
        <end position="124"/>
    </location>
</feature>
<feature type="domain" description="Lipoyl-binding" evidence="2">
    <location>
        <begin position="19"/>
        <end position="101"/>
    </location>
</feature>
<feature type="modified residue" description="N6-lipoyllysine" evidence="1">
    <location>
        <position position="60"/>
    </location>
</feature>
<feature type="strand" evidence="3">
    <location>
        <begin position="2"/>
        <end position="6"/>
    </location>
</feature>
<feature type="strand" evidence="3">
    <location>
        <begin position="10"/>
        <end position="16"/>
    </location>
</feature>
<feature type="strand" evidence="3">
    <location>
        <begin position="19"/>
        <end position="24"/>
    </location>
</feature>
<feature type="helix" evidence="3">
    <location>
        <begin position="26"/>
        <end position="32"/>
    </location>
</feature>
<feature type="strand" evidence="3">
    <location>
        <begin position="34"/>
        <end position="39"/>
    </location>
</feature>
<feature type="strand" evidence="3">
    <location>
        <begin position="52"/>
        <end position="60"/>
    </location>
</feature>
<feature type="strand" evidence="3">
    <location>
        <begin position="62"/>
        <end position="66"/>
    </location>
</feature>
<feature type="strand" evidence="3">
    <location>
        <begin position="71"/>
        <end position="76"/>
    </location>
</feature>
<feature type="helix" evidence="3">
    <location>
        <begin position="78"/>
        <end position="81"/>
    </location>
</feature>
<feature type="helix" evidence="3">
    <location>
        <begin position="86"/>
        <end position="89"/>
    </location>
</feature>
<feature type="turn" evidence="3">
    <location>
        <begin position="91"/>
        <end position="95"/>
    </location>
</feature>
<feature type="strand" evidence="3">
    <location>
        <begin position="98"/>
        <end position="103"/>
    </location>
</feature>
<feature type="helix" evidence="3">
    <location>
        <begin position="105"/>
        <end position="110"/>
    </location>
</feature>
<feature type="helix" evidence="3">
    <location>
        <begin position="114"/>
        <end position="122"/>
    </location>
</feature>